<name>RL24_CUPMC</name>
<accession>Q1LI48</accession>
<keyword id="KW-1185">Reference proteome</keyword>
<keyword id="KW-0687">Ribonucleoprotein</keyword>
<keyword id="KW-0689">Ribosomal protein</keyword>
<keyword id="KW-0694">RNA-binding</keyword>
<keyword id="KW-0699">rRNA-binding</keyword>
<sequence>MNKIRKGDEVIVLTGKDKGKRGTVQAVQGDKVVVEGVNVAKKHARPNPMLGTTGGVVDKLMPLHISNVALVDANGKPSRVGIKVEDGKRVRVLKTTGAVLAA</sequence>
<feature type="chain" id="PRO_1000052288" description="Large ribosomal subunit protein uL24">
    <location>
        <begin position="1"/>
        <end position="102"/>
    </location>
</feature>
<reference key="1">
    <citation type="journal article" date="2010" name="PLoS ONE">
        <title>The complete genome sequence of Cupriavidus metallidurans strain CH34, a master survivalist in harsh and anthropogenic environments.</title>
        <authorList>
            <person name="Janssen P.J."/>
            <person name="Van Houdt R."/>
            <person name="Moors H."/>
            <person name="Monsieurs P."/>
            <person name="Morin N."/>
            <person name="Michaux A."/>
            <person name="Benotmane M.A."/>
            <person name="Leys N."/>
            <person name="Vallaeys T."/>
            <person name="Lapidus A."/>
            <person name="Monchy S."/>
            <person name="Medigue C."/>
            <person name="Taghavi S."/>
            <person name="McCorkle S."/>
            <person name="Dunn J."/>
            <person name="van der Lelie D."/>
            <person name="Mergeay M."/>
        </authorList>
    </citation>
    <scope>NUCLEOTIDE SEQUENCE [LARGE SCALE GENOMIC DNA]</scope>
    <source>
        <strain>ATCC 43123 / DSM 2839 / NBRC 102507 / CH34</strain>
    </source>
</reference>
<protein>
    <recommendedName>
        <fullName evidence="1">Large ribosomal subunit protein uL24</fullName>
    </recommendedName>
    <alternativeName>
        <fullName evidence="2">50S ribosomal protein L24</fullName>
    </alternativeName>
</protein>
<gene>
    <name evidence="1" type="primary">rplX</name>
    <name type="ordered locus">Rmet_3306</name>
</gene>
<evidence type="ECO:0000255" key="1">
    <source>
        <dbReference type="HAMAP-Rule" id="MF_01326"/>
    </source>
</evidence>
<evidence type="ECO:0000305" key="2"/>
<comment type="function">
    <text evidence="1">One of two assembly initiator proteins, it binds directly to the 5'-end of the 23S rRNA, where it nucleates assembly of the 50S subunit.</text>
</comment>
<comment type="function">
    <text evidence="1">One of the proteins that surrounds the polypeptide exit tunnel on the outside of the subunit.</text>
</comment>
<comment type="subunit">
    <text evidence="1">Part of the 50S ribosomal subunit.</text>
</comment>
<comment type="similarity">
    <text evidence="1">Belongs to the universal ribosomal protein uL24 family.</text>
</comment>
<organism>
    <name type="scientific">Cupriavidus metallidurans (strain ATCC 43123 / DSM 2839 / NBRC 102507 / CH34)</name>
    <name type="common">Ralstonia metallidurans</name>
    <dbReference type="NCBI Taxonomy" id="266264"/>
    <lineage>
        <taxon>Bacteria</taxon>
        <taxon>Pseudomonadati</taxon>
        <taxon>Pseudomonadota</taxon>
        <taxon>Betaproteobacteria</taxon>
        <taxon>Burkholderiales</taxon>
        <taxon>Burkholderiaceae</taxon>
        <taxon>Cupriavidus</taxon>
    </lineage>
</organism>
<dbReference type="EMBL" id="CP000352">
    <property type="protein sequence ID" value="ABF10178.1"/>
    <property type="molecule type" value="Genomic_DNA"/>
</dbReference>
<dbReference type="RefSeq" id="WP_008642940.1">
    <property type="nucleotide sequence ID" value="NC_007973.1"/>
</dbReference>
<dbReference type="SMR" id="Q1LI48"/>
<dbReference type="STRING" id="266264.Rmet_3306"/>
<dbReference type="GeneID" id="60826611"/>
<dbReference type="KEGG" id="rme:Rmet_3306"/>
<dbReference type="eggNOG" id="COG0198">
    <property type="taxonomic scope" value="Bacteria"/>
</dbReference>
<dbReference type="HOGENOM" id="CLU_093315_2_2_4"/>
<dbReference type="Proteomes" id="UP000002429">
    <property type="component" value="Chromosome"/>
</dbReference>
<dbReference type="GO" id="GO:1990904">
    <property type="term" value="C:ribonucleoprotein complex"/>
    <property type="evidence" value="ECO:0007669"/>
    <property type="project" value="UniProtKB-KW"/>
</dbReference>
<dbReference type="GO" id="GO:0005840">
    <property type="term" value="C:ribosome"/>
    <property type="evidence" value="ECO:0007669"/>
    <property type="project" value="UniProtKB-KW"/>
</dbReference>
<dbReference type="GO" id="GO:0019843">
    <property type="term" value="F:rRNA binding"/>
    <property type="evidence" value="ECO:0007669"/>
    <property type="project" value="UniProtKB-UniRule"/>
</dbReference>
<dbReference type="GO" id="GO:0003735">
    <property type="term" value="F:structural constituent of ribosome"/>
    <property type="evidence" value="ECO:0007669"/>
    <property type="project" value="InterPro"/>
</dbReference>
<dbReference type="GO" id="GO:0006412">
    <property type="term" value="P:translation"/>
    <property type="evidence" value="ECO:0007669"/>
    <property type="project" value="UniProtKB-UniRule"/>
</dbReference>
<dbReference type="CDD" id="cd06089">
    <property type="entry name" value="KOW_RPL26"/>
    <property type="match status" value="1"/>
</dbReference>
<dbReference type="FunFam" id="2.30.30.30:FF:000004">
    <property type="entry name" value="50S ribosomal protein L24"/>
    <property type="match status" value="1"/>
</dbReference>
<dbReference type="Gene3D" id="2.30.30.30">
    <property type="match status" value="1"/>
</dbReference>
<dbReference type="HAMAP" id="MF_01326_B">
    <property type="entry name" value="Ribosomal_uL24_B"/>
    <property type="match status" value="1"/>
</dbReference>
<dbReference type="InterPro" id="IPR005824">
    <property type="entry name" value="KOW"/>
</dbReference>
<dbReference type="InterPro" id="IPR014722">
    <property type="entry name" value="Rib_uL2_dom2"/>
</dbReference>
<dbReference type="InterPro" id="IPR003256">
    <property type="entry name" value="Ribosomal_uL24"/>
</dbReference>
<dbReference type="InterPro" id="IPR005825">
    <property type="entry name" value="Ribosomal_uL24_CS"/>
</dbReference>
<dbReference type="InterPro" id="IPR041988">
    <property type="entry name" value="Ribosomal_uL24_KOW"/>
</dbReference>
<dbReference type="InterPro" id="IPR008991">
    <property type="entry name" value="Translation_prot_SH3-like_sf"/>
</dbReference>
<dbReference type="NCBIfam" id="TIGR01079">
    <property type="entry name" value="rplX_bact"/>
    <property type="match status" value="1"/>
</dbReference>
<dbReference type="PANTHER" id="PTHR12903">
    <property type="entry name" value="MITOCHONDRIAL RIBOSOMAL PROTEIN L24"/>
    <property type="match status" value="1"/>
</dbReference>
<dbReference type="Pfam" id="PF00467">
    <property type="entry name" value="KOW"/>
    <property type="match status" value="1"/>
</dbReference>
<dbReference type="Pfam" id="PF17136">
    <property type="entry name" value="ribosomal_L24"/>
    <property type="match status" value="1"/>
</dbReference>
<dbReference type="SMART" id="SM00739">
    <property type="entry name" value="KOW"/>
    <property type="match status" value="1"/>
</dbReference>
<dbReference type="SUPFAM" id="SSF50104">
    <property type="entry name" value="Translation proteins SH3-like domain"/>
    <property type="match status" value="1"/>
</dbReference>
<dbReference type="PROSITE" id="PS01108">
    <property type="entry name" value="RIBOSOMAL_L24"/>
    <property type="match status" value="1"/>
</dbReference>
<proteinExistence type="inferred from homology"/>